<gene>
    <name evidence="1" type="primary">KAE1</name>
    <name type="ordered locus">AEL316W</name>
</gene>
<comment type="function">
    <text evidence="1">Component of the EKC/KEOPS complex that is required for the formation of a threonylcarbamoyl group on adenosine at position 37 (t(6)A37) in tRNAs that read codons beginning with adenine. The complex is probably involved in the transfer of the threonylcarbamoyl moiety of threonylcarbamoyl-AMP (TC-AMP) to the N6 group of A37. KAE1 likely plays a direct catalytic role in this reaction, but requires other protein(s) of the complex to fulfill this activity. The EKC/KEOPS complex also promotes both telomere uncapping and telomere elongation. The complex is required for efficient recruitment of transcriptional coactivators.</text>
</comment>
<comment type="catalytic activity">
    <reaction evidence="1">
        <text>L-threonylcarbamoyladenylate + adenosine(37) in tRNA = N(6)-L-threonylcarbamoyladenosine(37) in tRNA + AMP + H(+)</text>
        <dbReference type="Rhea" id="RHEA:37059"/>
        <dbReference type="Rhea" id="RHEA-COMP:10162"/>
        <dbReference type="Rhea" id="RHEA-COMP:10163"/>
        <dbReference type="ChEBI" id="CHEBI:15378"/>
        <dbReference type="ChEBI" id="CHEBI:73682"/>
        <dbReference type="ChEBI" id="CHEBI:74411"/>
        <dbReference type="ChEBI" id="CHEBI:74418"/>
        <dbReference type="ChEBI" id="CHEBI:456215"/>
        <dbReference type="EC" id="2.3.1.234"/>
    </reaction>
</comment>
<comment type="cofactor">
    <cofactor evidence="1">
        <name>a divalent metal cation</name>
        <dbReference type="ChEBI" id="CHEBI:60240"/>
    </cofactor>
    <text evidence="1">Binds 1 divalent metal cation per subunit.</text>
</comment>
<comment type="subunit">
    <text evidence="1">Component of the EKC/KEOPS complex composed of at least BUD32, CGI121, GON7, KAE1 and PCC1; the whole complex dimerizes.</text>
</comment>
<comment type="subcellular location">
    <subcellularLocation>
        <location evidence="1">Cytoplasm</location>
    </subcellularLocation>
    <subcellularLocation>
        <location evidence="1">Nucleus</location>
    </subcellularLocation>
</comment>
<comment type="similarity">
    <text evidence="1">Belongs to the KAE1 / TsaD family.</text>
</comment>
<sequence length="385" mass="43035">MVNLNKVQPRSGGDHYLALGIEGSANKLGVGILKHPMLSQHKQGSLSHDCQAEILSNIRDTYITPPGEGFLPRDTARHHRNWVVRLVRRALVEAGIEDPRLLDVICFTKGPGMGAPLHSVVVAARTMSMLWDVPLVAVNHCIGHIEMGREITKAENPVVLYVSGGNTQVIAYSENRYRIFGETLDIAIGNCLDRFARTLKIPNDPSPGYNIEQLAKQCKNKDRLVELPYTVKGMDLSMSGILAHIDSLAKDLFRRNTKNYKLFDRETGKQLVTVEDLCYSLQEHLFAMLVEITERAMAHVNSNQVLIVGGVGCNVRLQQMMASMCQSRADGQVHATDERFCIDNGVMIAQAGLLQYRMGDIVKDFSETVVTQRFRTDEVYVSWRD</sequence>
<evidence type="ECO:0000255" key="1">
    <source>
        <dbReference type="HAMAP-Rule" id="MF_03180"/>
    </source>
</evidence>
<organism>
    <name type="scientific">Eremothecium gossypii (strain ATCC 10895 / CBS 109.51 / FGSC 9923 / NRRL Y-1056)</name>
    <name type="common">Yeast</name>
    <name type="synonym">Ashbya gossypii</name>
    <dbReference type="NCBI Taxonomy" id="284811"/>
    <lineage>
        <taxon>Eukaryota</taxon>
        <taxon>Fungi</taxon>
        <taxon>Dikarya</taxon>
        <taxon>Ascomycota</taxon>
        <taxon>Saccharomycotina</taxon>
        <taxon>Saccharomycetes</taxon>
        <taxon>Saccharomycetales</taxon>
        <taxon>Saccharomycetaceae</taxon>
        <taxon>Eremothecium</taxon>
    </lineage>
</organism>
<protein>
    <recommendedName>
        <fullName evidence="1">tRNA N6-adenosine threonylcarbamoyltransferase</fullName>
        <ecNumber evidence="1">2.3.1.234</ecNumber>
    </recommendedName>
    <alternativeName>
        <fullName>N6-L-threonylcarbamoyladenine synthase</fullName>
        <shortName>t(6)A synthase</shortName>
    </alternativeName>
    <alternativeName>
        <fullName evidence="1">t(6)A37 threonylcarbamoyladenosine biosynthesis protein KAE1</fullName>
    </alternativeName>
    <alternativeName>
        <fullName evidence="1">tRNA threonylcarbamoyladenosine biosynthesis protein KAE1</fullName>
    </alternativeName>
</protein>
<dbReference type="EC" id="2.3.1.234" evidence="1"/>
<dbReference type="EMBL" id="AE016818">
    <property type="protein sequence ID" value="AAS52368.1"/>
    <property type="molecule type" value="Genomic_DNA"/>
</dbReference>
<dbReference type="RefSeq" id="NP_984544.1">
    <property type="nucleotide sequence ID" value="NM_209897.1"/>
</dbReference>
<dbReference type="SMR" id="Q758R9"/>
<dbReference type="FunCoup" id="Q758R9">
    <property type="interactions" value="619"/>
</dbReference>
<dbReference type="STRING" id="284811.Q758R9"/>
<dbReference type="EnsemblFungi" id="AAS52368">
    <property type="protein sequence ID" value="AAS52368"/>
    <property type="gene ID" value="AGOS_AEL316W"/>
</dbReference>
<dbReference type="GeneID" id="4620716"/>
<dbReference type="KEGG" id="ago:AGOS_AEL316W"/>
<dbReference type="eggNOG" id="KOG2708">
    <property type="taxonomic scope" value="Eukaryota"/>
</dbReference>
<dbReference type="HOGENOM" id="CLU_023208_2_2_1"/>
<dbReference type="InParanoid" id="Q758R9"/>
<dbReference type="OMA" id="HHRSWVV"/>
<dbReference type="OrthoDB" id="10254073at2759"/>
<dbReference type="Proteomes" id="UP000000591">
    <property type="component" value="Chromosome V"/>
</dbReference>
<dbReference type="GO" id="GO:0000785">
    <property type="term" value="C:chromatin"/>
    <property type="evidence" value="ECO:0007669"/>
    <property type="project" value="EnsemblFungi"/>
</dbReference>
<dbReference type="GO" id="GO:0005737">
    <property type="term" value="C:cytoplasm"/>
    <property type="evidence" value="ECO:0000318"/>
    <property type="project" value="GO_Central"/>
</dbReference>
<dbReference type="GO" id="GO:0000408">
    <property type="term" value="C:EKC/KEOPS complex"/>
    <property type="evidence" value="ECO:0000318"/>
    <property type="project" value="GO_Central"/>
</dbReference>
<dbReference type="GO" id="GO:0005634">
    <property type="term" value="C:nucleus"/>
    <property type="evidence" value="ECO:0007669"/>
    <property type="project" value="UniProtKB-SubCell"/>
</dbReference>
<dbReference type="GO" id="GO:0031490">
    <property type="term" value="F:chromatin DNA binding"/>
    <property type="evidence" value="ECO:0007669"/>
    <property type="project" value="EnsemblFungi"/>
</dbReference>
<dbReference type="GO" id="GO:0046872">
    <property type="term" value="F:metal ion binding"/>
    <property type="evidence" value="ECO:0007669"/>
    <property type="project" value="UniProtKB-KW"/>
</dbReference>
<dbReference type="GO" id="GO:0061711">
    <property type="term" value="F:N(6)-L-threonylcarbamoyladenine synthase activity"/>
    <property type="evidence" value="ECO:0007669"/>
    <property type="project" value="UniProtKB-EC"/>
</dbReference>
<dbReference type="GO" id="GO:0008252">
    <property type="term" value="F:nucleotidase activity"/>
    <property type="evidence" value="ECO:0007669"/>
    <property type="project" value="EnsemblFungi"/>
</dbReference>
<dbReference type="GO" id="GO:0045944">
    <property type="term" value="P:positive regulation of transcription by RNA polymerase II"/>
    <property type="evidence" value="ECO:0007669"/>
    <property type="project" value="EnsemblFungi"/>
</dbReference>
<dbReference type="GO" id="GO:0000722">
    <property type="term" value="P:telomere maintenance via recombination"/>
    <property type="evidence" value="ECO:0007669"/>
    <property type="project" value="EnsemblFungi"/>
</dbReference>
<dbReference type="GO" id="GO:0002949">
    <property type="term" value="P:tRNA threonylcarbamoyladenosine modification"/>
    <property type="evidence" value="ECO:0007669"/>
    <property type="project" value="UniProtKB-UniRule"/>
</dbReference>
<dbReference type="CDD" id="cd24132">
    <property type="entry name" value="ASKHA_NBD_OSGEP_like_euk"/>
    <property type="match status" value="1"/>
</dbReference>
<dbReference type="FunFam" id="3.30.420.40:FF:000038">
    <property type="entry name" value="Probable tRNA N6-adenosine threonylcarbamoyltransferase"/>
    <property type="match status" value="1"/>
</dbReference>
<dbReference type="Gene3D" id="3.30.420.40">
    <property type="match status" value="2"/>
</dbReference>
<dbReference type="HAMAP" id="MF_01446">
    <property type="entry name" value="Kae1"/>
    <property type="match status" value="1"/>
</dbReference>
<dbReference type="InterPro" id="IPR043129">
    <property type="entry name" value="ATPase_NBD"/>
</dbReference>
<dbReference type="InterPro" id="IPR000905">
    <property type="entry name" value="Gcp-like_dom"/>
</dbReference>
<dbReference type="InterPro" id="IPR017861">
    <property type="entry name" value="KAE1/TsaD"/>
</dbReference>
<dbReference type="InterPro" id="IPR034680">
    <property type="entry name" value="Kae1_archaea_euk"/>
</dbReference>
<dbReference type="InterPro" id="IPR017860">
    <property type="entry name" value="Peptidase_M22_CS"/>
</dbReference>
<dbReference type="NCBIfam" id="TIGR00329">
    <property type="entry name" value="gcp_kae1"/>
    <property type="match status" value="1"/>
</dbReference>
<dbReference type="PANTHER" id="PTHR11735">
    <property type="entry name" value="TRNA N6-ADENOSINE THREONYLCARBAMOYLTRANSFERASE"/>
    <property type="match status" value="1"/>
</dbReference>
<dbReference type="PANTHER" id="PTHR11735:SF14">
    <property type="entry name" value="TRNA N6-ADENOSINE THREONYLCARBAMOYLTRANSFERASE"/>
    <property type="match status" value="1"/>
</dbReference>
<dbReference type="Pfam" id="PF00814">
    <property type="entry name" value="TsaD"/>
    <property type="match status" value="1"/>
</dbReference>
<dbReference type="PRINTS" id="PR00789">
    <property type="entry name" value="OSIALOPTASE"/>
</dbReference>
<dbReference type="SUPFAM" id="SSF53067">
    <property type="entry name" value="Actin-like ATPase domain"/>
    <property type="match status" value="1"/>
</dbReference>
<dbReference type="PROSITE" id="PS01016">
    <property type="entry name" value="GLYCOPROTEASE"/>
    <property type="match status" value="1"/>
</dbReference>
<reference key="1">
    <citation type="journal article" date="2004" name="Science">
        <title>The Ashbya gossypii genome as a tool for mapping the ancient Saccharomyces cerevisiae genome.</title>
        <authorList>
            <person name="Dietrich F.S."/>
            <person name="Voegeli S."/>
            <person name="Brachat S."/>
            <person name="Lerch A."/>
            <person name="Gates K."/>
            <person name="Steiner S."/>
            <person name="Mohr C."/>
            <person name="Poehlmann R."/>
            <person name="Luedi P."/>
            <person name="Choi S."/>
            <person name="Wing R.A."/>
            <person name="Flavier A."/>
            <person name="Gaffney T.D."/>
            <person name="Philippsen P."/>
        </authorList>
    </citation>
    <scope>NUCLEOTIDE SEQUENCE [LARGE SCALE GENOMIC DNA]</scope>
    <source>
        <strain>ATCC 10895 / CBS 109.51 / FGSC 9923 / NRRL Y-1056</strain>
    </source>
</reference>
<reference key="2">
    <citation type="journal article" date="2013" name="G3 (Bethesda)">
        <title>Genomes of Ashbya fungi isolated from insects reveal four mating-type loci, numerous translocations, lack of transposons, and distinct gene duplications.</title>
        <authorList>
            <person name="Dietrich F.S."/>
            <person name="Voegeli S."/>
            <person name="Kuo S."/>
            <person name="Philippsen P."/>
        </authorList>
    </citation>
    <scope>GENOME REANNOTATION</scope>
    <source>
        <strain>ATCC 10895 / CBS 109.51 / FGSC 9923 / NRRL Y-1056</strain>
    </source>
</reference>
<accession>Q758R9</accession>
<keyword id="KW-0010">Activator</keyword>
<keyword id="KW-0012">Acyltransferase</keyword>
<keyword id="KW-0963">Cytoplasm</keyword>
<keyword id="KW-0479">Metal-binding</keyword>
<keyword id="KW-0539">Nucleus</keyword>
<keyword id="KW-1185">Reference proteome</keyword>
<keyword id="KW-0804">Transcription</keyword>
<keyword id="KW-0805">Transcription regulation</keyword>
<keyword id="KW-0808">Transferase</keyword>
<keyword id="KW-0819">tRNA processing</keyword>
<feature type="chain" id="PRO_0000278924" description="tRNA N6-adenosine threonylcarbamoyltransferase">
    <location>
        <begin position="1"/>
        <end position="385"/>
    </location>
</feature>
<feature type="binding site" evidence="1">
    <location>
        <position position="140"/>
    </location>
    <ligand>
        <name>a divalent metal cation</name>
        <dbReference type="ChEBI" id="CHEBI:60240"/>
    </ligand>
</feature>
<feature type="binding site" evidence="1">
    <location>
        <position position="144"/>
    </location>
    <ligand>
        <name>a divalent metal cation</name>
        <dbReference type="ChEBI" id="CHEBI:60240"/>
    </ligand>
</feature>
<feature type="binding site" evidence="1">
    <location>
        <begin position="161"/>
        <end position="165"/>
    </location>
    <ligand>
        <name>substrate</name>
    </ligand>
</feature>
<feature type="binding site" evidence="1">
    <location>
        <position position="161"/>
    </location>
    <ligand>
        <name>a divalent metal cation</name>
        <dbReference type="ChEBI" id="CHEBI:60240"/>
    </ligand>
</feature>
<feature type="binding site" evidence="1">
    <location>
        <position position="193"/>
    </location>
    <ligand>
        <name>substrate</name>
    </ligand>
</feature>
<feature type="binding site" evidence="1">
    <location>
        <position position="208"/>
    </location>
    <ligand>
        <name>substrate</name>
    </ligand>
</feature>
<feature type="binding site" evidence="1">
    <location>
        <position position="212"/>
    </location>
    <ligand>
        <name>substrate</name>
    </ligand>
</feature>
<feature type="binding site" evidence="1">
    <location>
        <position position="314"/>
    </location>
    <ligand>
        <name>substrate</name>
    </ligand>
</feature>
<feature type="binding site" evidence="1">
    <location>
        <position position="343"/>
    </location>
    <ligand>
        <name>a divalent metal cation</name>
        <dbReference type="ChEBI" id="CHEBI:60240"/>
    </ligand>
</feature>
<name>KAE1_EREGS</name>
<proteinExistence type="inferred from homology"/>